<name>SLEB_BACCE</name>
<reference key="1">
    <citation type="journal article" date="1996" name="J. Bacteriol.">
        <title>A germination-specific spore cortex-lytic enzyme from Bacillus cereus spores: cloning and sequencing of the gene and molecular characterization of the enzyme.</title>
        <authorList>
            <person name="Moriyama R."/>
            <person name="Kudoh S."/>
            <person name="Miyata S."/>
            <person name="Nonobe S."/>
            <person name="Hattori A."/>
            <person name="Makino S."/>
        </authorList>
    </citation>
    <scope>NUCLEOTIDE SEQUENCE [GENOMIC DNA]</scope>
    <scope>PROTEIN SEQUENCE OF 33-52; 64-80; 83-94 AND 215-234</scope>
    <scope>MUTAGENESIS OF CYS-258</scope>
    <source>
        <strain>NBRC 13597</strain>
    </source>
</reference>
<reference key="2">
    <citation type="journal article" date="1994" name="Microbiology">
        <title>A spore-lytic enzyme released from Bacillus cereus spores during germination.</title>
        <authorList>
            <person name="Makino S."/>
            <person name="Ito N."/>
            <person name="Inoue T."/>
            <person name="Miyata S."/>
            <person name="Moriyama R."/>
        </authorList>
    </citation>
    <scope>PROTEIN SEQUENCE OF 33-51</scope>
    <source>
        <strain>NBRC 13597</strain>
    </source>
</reference>
<reference key="3">
    <citation type="journal article" date="1999" name="J. Bacteriol.">
        <title>Expression of a germination-specific amidase, SleB, of Bacilli in the forespore compartment of sporulating cells and its localization on the exterior side of the cortex in dormant spores.</title>
        <authorList>
            <person name="Moriyama R."/>
            <person name="Fukuoka H."/>
            <person name="Miyata S."/>
            <person name="Kudoh S."/>
            <person name="Hattori A."/>
            <person name="Kozuka S."/>
            <person name="Yasuda Y."/>
            <person name="Tochikubo K."/>
            <person name="Makino S."/>
        </authorList>
    </citation>
    <scope>CHARACTERIZATION</scope>
</reference>
<gene>
    <name type="primary">sleB</name>
</gene>
<comment type="function">
    <text>Probable N-acetylmuramyl-L-alanine amidase. Required for spore cortex hydrolysis during germination. May form a complex with some hydrophobic spore component, leading to a stabilization of the enzyme in a spore-bound form.</text>
</comment>
<comment type="activity regulation">
    <text>Inhibited by HgCl(2). Activity is recovered by the addition of 2-mercaptoethanol.</text>
</comment>
<comment type="subcellular location">
    <subcellularLocation>
        <location>Forespore</location>
    </subcellularLocation>
    <text>Expressed in the forespore and then transported across the inner forespore membrane and deposited on the outside of the cortex.</text>
</comment>
<comment type="developmental stage">
    <text>Expressed during sporulation and active during germination. Exists as mature but inactive form in the dormant spore.</text>
</comment>
<comment type="induction">
    <text>Expression is sigma G-dependent.</text>
</comment>
<comment type="miscellaneous">
    <text>B.cereus SleB could not be detected with anti-B.subtilis SleB antiserum and vice versa.</text>
</comment>
<comment type="similarity">
    <text evidence="4">Belongs to the SleB family.</text>
</comment>
<evidence type="ECO:0000256" key="1">
    <source>
        <dbReference type="SAM" id="MobiDB-lite"/>
    </source>
</evidence>
<evidence type="ECO:0000269" key="2">
    <source>
    </source>
</evidence>
<evidence type="ECO:0000269" key="3">
    <source>
    </source>
</evidence>
<evidence type="ECO:0000305" key="4"/>
<keyword id="KW-0961">Cell wall biogenesis/degradation</keyword>
<keyword id="KW-0903">Direct protein sequencing</keyword>
<keyword id="KW-0309">Germination</keyword>
<keyword id="KW-0378">Hydrolase</keyword>
<keyword id="KW-0732">Signal</keyword>
<keyword id="KW-0749">Sporulation</keyword>
<proteinExistence type="evidence at protein level"/>
<sequence length="259" mass="28257">MRQKAIFKIAVLLAFIGLSLMVSSIQLKNVEAFSNQVIQRGASGEDVIELQSRLKYNGFYTGKVDGVFGWGTYWALRNFQEKFGLPVDGLAGAKTKQMLVKATKYDKSTANKGTTTNKGNSGGTAQENKPPQNKGTNVPNGYSQNDIQLMANAVYGESRGEPYLGQVAVAAVILNRVTSASFPNTVSGVIFEPRAFTAVADGQIYLTPNETAKKAVLDAINGWDPTGNALYYFNPDTATSKWIWTRPQIKKIGKHIFCK</sequence>
<organism>
    <name type="scientific">Bacillus cereus</name>
    <dbReference type="NCBI Taxonomy" id="1396"/>
    <lineage>
        <taxon>Bacteria</taxon>
        <taxon>Bacillati</taxon>
        <taxon>Bacillota</taxon>
        <taxon>Bacilli</taxon>
        <taxon>Bacillales</taxon>
        <taxon>Bacillaceae</taxon>
        <taxon>Bacillus</taxon>
        <taxon>Bacillus cereus group</taxon>
    </lineage>
</organism>
<accession>P0A3V1</accession>
<accession>P70874</accession>
<feature type="signal peptide" evidence="2 3">
    <location>
        <begin position="1"/>
        <end position="32"/>
    </location>
</feature>
<feature type="chain" id="PRO_0000022355" description="Spore cortex-lytic enzyme">
    <location>
        <begin position="33"/>
        <end position="259"/>
    </location>
</feature>
<feature type="region of interest" description="Disordered" evidence="1">
    <location>
        <begin position="109"/>
        <end position="142"/>
    </location>
</feature>
<feature type="compositionally biased region" description="Low complexity" evidence="1">
    <location>
        <begin position="110"/>
        <end position="125"/>
    </location>
</feature>
<feature type="compositionally biased region" description="Polar residues" evidence="1">
    <location>
        <begin position="126"/>
        <end position="142"/>
    </location>
</feature>
<feature type="mutagenesis site" description="Strong decrease in activity." evidence="3">
    <original>C</original>
    <variation>G</variation>
    <location>
        <position position="258"/>
    </location>
</feature>
<feature type="sequence conflict" description="In Ref. 2; AA sequence." evidence="4" ref="2">
    <original>D</original>
    <variation>K</variation>
    <location>
        <position position="46"/>
    </location>
</feature>
<protein>
    <recommendedName>
        <fullName>Spore cortex-lytic enzyme</fullName>
        <shortName>SCLE</shortName>
    </recommendedName>
    <alternativeName>
        <fullName>Germination-specific amidase</fullName>
    </alternativeName>
</protein>
<dbReference type="EMBL" id="D63645">
    <property type="protein sequence ID" value="BAA09800.1"/>
    <property type="molecule type" value="Genomic_DNA"/>
</dbReference>
<dbReference type="RefSeq" id="WP_001249053.1">
    <property type="nucleotide sequence ID" value="NZ_WBPP01000045.1"/>
</dbReference>
<dbReference type="SMR" id="P0A3V1"/>
<dbReference type="GeneID" id="93008420"/>
<dbReference type="eggNOG" id="COG3409">
    <property type="taxonomic scope" value="Bacteria"/>
</dbReference>
<dbReference type="eggNOG" id="COG3773">
    <property type="taxonomic scope" value="Bacteria"/>
</dbReference>
<dbReference type="OMA" id="WGYYDGP"/>
<dbReference type="GO" id="GO:0042763">
    <property type="term" value="C:intracellular immature spore"/>
    <property type="evidence" value="ECO:0007669"/>
    <property type="project" value="UniProtKB-SubCell"/>
</dbReference>
<dbReference type="GO" id="GO:0016787">
    <property type="term" value="F:hydrolase activity"/>
    <property type="evidence" value="ECO:0007669"/>
    <property type="project" value="UniProtKB-KW"/>
</dbReference>
<dbReference type="GO" id="GO:0071555">
    <property type="term" value="P:cell wall organization"/>
    <property type="evidence" value="ECO:0007669"/>
    <property type="project" value="UniProtKB-KW"/>
</dbReference>
<dbReference type="GO" id="GO:0009847">
    <property type="term" value="P:spore germination"/>
    <property type="evidence" value="ECO:0007669"/>
    <property type="project" value="InterPro"/>
</dbReference>
<dbReference type="GO" id="GO:0030435">
    <property type="term" value="P:sporulation resulting in formation of a cellular spore"/>
    <property type="evidence" value="ECO:0007669"/>
    <property type="project" value="UniProtKB-KW"/>
</dbReference>
<dbReference type="FunFam" id="1.10.10.2520:FF:000001">
    <property type="entry name" value="Spore cortex-lytic enzyme"/>
    <property type="match status" value="1"/>
</dbReference>
<dbReference type="FunFam" id="1.10.101.10:FF:000001">
    <property type="entry name" value="Spore cortex-lytic enzyme"/>
    <property type="match status" value="1"/>
</dbReference>
<dbReference type="FunFam" id="6.20.240.60:FF:000001">
    <property type="entry name" value="Spore cortex-lytic enzyme"/>
    <property type="match status" value="1"/>
</dbReference>
<dbReference type="Gene3D" id="6.20.240.60">
    <property type="match status" value="1"/>
</dbReference>
<dbReference type="Gene3D" id="1.10.10.2520">
    <property type="entry name" value="Cell wall hydrolase SleB, domain 1"/>
    <property type="match status" value="1"/>
</dbReference>
<dbReference type="Gene3D" id="1.10.101.10">
    <property type="entry name" value="PGBD-like superfamily/PGBD"/>
    <property type="match status" value="1"/>
</dbReference>
<dbReference type="InterPro" id="IPR011105">
    <property type="entry name" value="Cell_wall_hydrolase_SleB"/>
</dbReference>
<dbReference type="InterPro" id="IPR002477">
    <property type="entry name" value="Peptidoglycan-bd-like"/>
</dbReference>
<dbReference type="InterPro" id="IPR036365">
    <property type="entry name" value="PGBD-like_sf"/>
</dbReference>
<dbReference type="InterPro" id="IPR036366">
    <property type="entry name" value="PGBDSf"/>
</dbReference>
<dbReference type="InterPro" id="IPR042047">
    <property type="entry name" value="SleB_dom1"/>
</dbReference>
<dbReference type="InterPro" id="IPR014224">
    <property type="entry name" value="Spore_cortex_SleB"/>
</dbReference>
<dbReference type="NCBIfam" id="TIGR02869">
    <property type="entry name" value="spore_SleB"/>
    <property type="match status" value="1"/>
</dbReference>
<dbReference type="Pfam" id="PF07486">
    <property type="entry name" value="Hydrolase_2"/>
    <property type="match status" value="1"/>
</dbReference>
<dbReference type="Pfam" id="PF01471">
    <property type="entry name" value="PG_binding_1"/>
    <property type="match status" value="1"/>
</dbReference>
<dbReference type="SUPFAM" id="SSF47090">
    <property type="entry name" value="PGBD-like"/>
    <property type="match status" value="1"/>
</dbReference>